<protein>
    <recommendedName>
        <fullName evidence="1">Small ribosomal subunit protein uS7</fullName>
    </recommendedName>
    <alternativeName>
        <fullName evidence="2">30S ribosomal protein S7</fullName>
    </alternativeName>
</protein>
<evidence type="ECO:0000255" key="1">
    <source>
        <dbReference type="HAMAP-Rule" id="MF_00480"/>
    </source>
</evidence>
<evidence type="ECO:0000305" key="2"/>
<feature type="chain" id="PRO_0000124247" description="Small ribosomal subunit protein uS7">
    <location>
        <begin position="1"/>
        <end position="157"/>
    </location>
</feature>
<dbReference type="EMBL" id="AE001273">
    <property type="protein sequence ID" value="AAC68037.1"/>
    <property type="molecule type" value="Genomic_DNA"/>
</dbReference>
<dbReference type="PIR" id="S19249">
    <property type="entry name" value="R3CWS7"/>
</dbReference>
<dbReference type="RefSeq" id="NP_219950.1">
    <property type="nucleotide sequence ID" value="NC_000117.1"/>
</dbReference>
<dbReference type="RefSeq" id="WP_009871793.1">
    <property type="nucleotide sequence ID" value="NC_000117.1"/>
</dbReference>
<dbReference type="SMR" id="P0CE06"/>
<dbReference type="FunCoup" id="P0CE06">
    <property type="interactions" value="273"/>
</dbReference>
<dbReference type="STRING" id="272561.CT_438"/>
<dbReference type="EnsemblBacteria" id="AAC68037">
    <property type="protein sequence ID" value="AAC68037"/>
    <property type="gene ID" value="CT_438"/>
</dbReference>
<dbReference type="GeneID" id="884211"/>
<dbReference type="KEGG" id="ctr:CT_438"/>
<dbReference type="PATRIC" id="fig|272561.5.peg.473"/>
<dbReference type="HOGENOM" id="CLU_072226_1_1_0"/>
<dbReference type="InParanoid" id="P0CE06"/>
<dbReference type="OrthoDB" id="9807653at2"/>
<dbReference type="Proteomes" id="UP000000431">
    <property type="component" value="Chromosome"/>
</dbReference>
<dbReference type="GO" id="GO:0022627">
    <property type="term" value="C:cytosolic small ribosomal subunit"/>
    <property type="evidence" value="ECO:0000318"/>
    <property type="project" value="GO_Central"/>
</dbReference>
<dbReference type="GO" id="GO:0005840">
    <property type="term" value="C:ribosome"/>
    <property type="evidence" value="ECO:0000318"/>
    <property type="project" value="GO_Central"/>
</dbReference>
<dbReference type="GO" id="GO:0003729">
    <property type="term" value="F:mRNA binding"/>
    <property type="evidence" value="ECO:0000318"/>
    <property type="project" value="GO_Central"/>
</dbReference>
<dbReference type="GO" id="GO:0019843">
    <property type="term" value="F:rRNA binding"/>
    <property type="evidence" value="ECO:0000318"/>
    <property type="project" value="GO_Central"/>
</dbReference>
<dbReference type="GO" id="GO:0003735">
    <property type="term" value="F:structural constituent of ribosome"/>
    <property type="evidence" value="ECO:0000318"/>
    <property type="project" value="GO_Central"/>
</dbReference>
<dbReference type="GO" id="GO:0000049">
    <property type="term" value="F:tRNA binding"/>
    <property type="evidence" value="ECO:0007669"/>
    <property type="project" value="UniProtKB-UniRule"/>
</dbReference>
<dbReference type="GO" id="GO:0000028">
    <property type="term" value="P:ribosomal small subunit assembly"/>
    <property type="evidence" value="ECO:0000318"/>
    <property type="project" value="GO_Central"/>
</dbReference>
<dbReference type="GO" id="GO:0006412">
    <property type="term" value="P:translation"/>
    <property type="evidence" value="ECO:0000318"/>
    <property type="project" value="GO_Central"/>
</dbReference>
<dbReference type="CDD" id="cd14869">
    <property type="entry name" value="uS7_Bacteria"/>
    <property type="match status" value="1"/>
</dbReference>
<dbReference type="FunFam" id="1.10.455.10:FF:000001">
    <property type="entry name" value="30S ribosomal protein S7"/>
    <property type="match status" value="1"/>
</dbReference>
<dbReference type="Gene3D" id="1.10.455.10">
    <property type="entry name" value="Ribosomal protein S7 domain"/>
    <property type="match status" value="1"/>
</dbReference>
<dbReference type="HAMAP" id="MF_00480_B">
    <property type="entry name" value="Ribosomal_uS7_B"/>
    <property type="match status" value="1"/>
</dbReference>
<dbReference type="InterPro" id="IPR000235">
    <property type="entry name" value="Ribosomal_uS7"/>
</dbReference>
<dbReference type="InterPro" id="IPR005717">
    <property type="entry name" value="Ribosomal_uS7_bac/org-type"/>
</dbReference>
<dbReference type="InterPro" id="IPR020606">
    <property type="entry name" value="Ribosomal_uS7_CS"/>
</dbReference>
<dbReference type="InterPro" id="IPR023798">
    <property type="entry name" value="Ribosomal_uS7_dom"/>
</dbReference>
<dbReference type="InterPro" id="IPR036823">
    <property type="entry name" value="Ribosomal_uS7_dom_sf"/>
</dbReference>
<dbReference type="NCBIfam" id="TIGR01029">
    <property type="entry name" value="rpsG_bact"/>
    <property type="match status" value="1"/>
</dbReference>
<dbReference type="PANTHER" id="PTHR11205">
    <property type="entry name" value="RIBOSOMAL PROTEIN S7"/>
    <property type="match status" value="1"/>
</dbReference>
<dbReference type="Pfam" id="PF00177">
    <property type="entry name" value="Ribosomal_S7"/>
    <property type="match status" value="1"/>
</dbReference>
<dbReference type="PIRSF" id="PIRSF002122">
    <property type="entry name" value="RPS7p_RPS7a_RPS5e_RPS7o"/>
    <property type="match status" value="1"/>
</dbReference>
<dbReference type="SUPFAM" id="SSF47973">
    <property type="entry name" value="Ribosomal protein S7"/>
    <property type="match status" value="1"/>
</dbReference>
<dbReference type="PROSITE" id="PS00052">
    <property type="entry name" value="RIBOSOMAL_S7"/>
    <property type="match status" value="1"/>
</dbReference>
<accession>P0CE06</accession>
<accession>O84445</accession>
<accession>P29765</accession>
<organism>
    <name type="scientific">Chlamydia trachomatis serovar D (strain ATCC VR-885 / DSM 19411 / UW-3/Cx)</name>
    <dbReference type="NCBI Taxonomy" id="272561"/>
    <lineage>
        <taxon>Bacteria</taxon>
        <taxon>Pseudomonadati</taxon>
        <taxon>Chlamydiota</taxon>
        <taxon>Chlamydiia</taxon>
        <taxon>Chlamydiales</taxon>
        <taxon>Chlamydiaceae</taxon>
        <taxon>Chlamydia/Chlamydophila group</taxon>
        <taxon>Chlamydia</taxon>
    </lineage>
</organism>
<gene>
    <name evidence="1" type="primary">rpsG</name>
    <name type="synonym">rs7</name>
    <name type="ordered locus">CT_438</name>
</gene>
<comment type="function">
    <text evidence="1">One of the primary rRNA binding proteins, it binds directly to 16S rRNA where it nucleates assembly of the head domain of the 30S subunit. Is located at the subunit interface close to the decoding center, probably blocks exit of the E-site tRNA.</text>
</comment>
<comment type="subunit">
    <text evidence="1">Part of the 30S ribosomal subunit. Contacts proteins S9 and S11.</text>
</comment>
<comment type="similarity">
    <text evidence="1">Belongs to the universal ribosomal protein uS7 family.</text>
</comment>
<keyword id="KW-1185">Reference proteome</keyword>
<keyword id="KW-0687">Ribonucleoprotein</keyword>
<keyword id="KW-0689">Ribosomal protein</keyword>
<keyword id="KW-0694">RNA-binding</keyword>
<keyword id="KW-0699">rRNA-binding</keyword>
<keyword id="KW-0820">tRNA-binding</keyword>
<sequence length="157" mass="17785">MSRRHAAEKKVIPGDPVYGSVVLERFINKVMLHGKKSIARKIVYGALERFAKRLGLENPLEGFEEALENAKPVLEVRSRRVGGATYQVPVEVAPDRRSCLAMQWIIKHARSKPGKCMEVGLANELIDCFNKQGATIKKREDTHRMAEANKAFAHYKW</sequence>
<reference key="1">
    <citation type="journal article" date="1998" name="Science">
        <title>Genome sequence of an obligate intracellular pathogen of humans: Chlamydia trachomatis.</title>
        <authorList>
            <person name="Stephens R.S."/>
            <person name="Kalman S."/>
            <person name="Lammel C.J."/>
            <person name="Fan J."/>
            <person name="Marathe R."/>
            <person name="Aravind L."/>
            <person name="Mitchell W.P."/>
            <person name="Olinger L."/>
            <person name="Tatusov R.L."/>
            <person name="Zhao Q."/>
            <person name="Koonin E.V."/>
            <person name="Davis R.W."/>
        </authorList>
    </citation>
    <scope>NUCLEOTIDE SEQUENCE [LARGE SCALE GENOMIC DNA]</scope>
    <source>
        <strain>ATCC VR-885 / DSM 19411 / UW-3/Cx</strain>
    </source>
</reference>
<proteinExistence type="inferred from homology"/>
<name>RS7_CHLTR</name>